<keyword id="KW-0963">Cytoplasm</keyword>
<keyword id="KW-0274">FAD</keyword>
<keyword id="KW-0285">Flavoprotein</keyword>
<keyword id="KW-0547">Nucleotide-binding</keyword>
<keyword id="KW-0560">Oxidoreductase</keyword>
<keyword id="KW-0662">Pyridine nucleotide biosynthesis</keyword>
<keyword id="KW-1185">Reference proteome</keyword>
<comment type="function">
    <text evidence="1">Catalyzes the oxidation of L-aspartate to iminoaspartate, the first step in the de novo biosynthesis of NAD(+).</text>
</comment>
<comment type="catalytic activity">
    <reaction evidence="1">
        <text>L-aspartate + O2 = iminosuccinate + H2O2</text>
        <dbReference type="Rhea" id="RHEA:25876"/>
        <dbReference type="ChEBI" id="CHEBI:15379"/>
        <dbReference type="ChEBI" id="CHEBI:16240"/>
        <dbReference type="ChEBI" id="CHEBI:29991"/>
        <dbReference type="ChEBI" id="CHEBI:77875"/>
        <dbReference type="EC" id="1.4.3.16"/>
    </reaction>
    <physiologicalReaction direction="left-to-right" evidence="1">
        <dbReference type="Rhea" id="RHEA:25877"/>
    </physiologicalReaction>
</comment>
<comment type="cofactor">
    <cofactor evidence="1">
        <name>FAD</name>
        <dbReference type="ChEBI" id="CHEBI:57692"/>
    </cofactor>
    <text evidence="1">Binds 1 FAD per subunit.</text>
</comment>
<comment type="pathway">
    <text evidence="1">Cofactor biosynthesis; NAD(+) biosynthesis; iminoaspartate from L-aspartate (oxidase route): step 1/1.</text>
</comment>
<comment type="subcellular location">
    <subcellularLocation>
        <location evidence="1">Cytoplasm</location>
    </subcellularLocation>
</comment>
<comment type="similarity">
    <text evidence="2">Belongs to the FAD-dependent oxidoreductase 2 family. NadB subfamily.</text>
</comment>
<gene>
    <name type="primary">nadB</name>
    <name type="ordered locus">PF1976</name>
</gene>
<proteinExistence type="inferred from homology"/>
<protein>
    <recommendedName>
        <fullName evidence="1">L-aspartate oxidase</fullName>
        <shortName evidence="1">LASPO</shortName>
        <ecNumber evidence="1">1.4.3.16</ecNumber>
    </recommendedName>
    <alternativeName>
        <fullName>Quinolinate synthase B</fullName>
    </alternativeName>
</protein>
<organism>
    <name type="scientific">Pyrococcus furiosus (strain ATCC 43587 / DSM 3638 / JCM 8422 / Vc1)</name>
    <dbReference type="NCBI Taxonomy" id="186497"/>
    <lineage>
        <taxon>Archaea</taxon>
        <taxon>Methanobacteriati</taxon>
        <taxon>Methanobacteriota</taxon>
        <taxon>Thermococci</taxon>
        <taxon>Thermococcales</taxon>
        <taxon>Thermococcaceae</taxon>
        <taxon>Pyrococcus</taxon>
    </lineage>
</organism>
<reference key="1">
    <citation type="journal article" date="1999" name="Genetics">
        <title>Divergence of the hyperthermophilic archaea Pyrococcus furiosus and P. horikoshii inferred from complete genomic sequences.</title>
        <authorList>
            <person name="Maeder D.L."/>
            <person name="Weiss R.B."/>
            <person name="Dunn D.M."/>
            <person name="Cherry J.L."/>
            <person name="Gonzalez J.M."/>
            <person name="DiRuggiero J."/>
            <person name="Robb F.T."/>
        </authorList>
    </citation>
    <scope>NUCLEOTIDE SEQUENCE [LARGE SCALE GENOMIC DNA]</scope>
    <source>
        <strain>ATCC 43587 / DSM 3638 / JCM 8422 / Vc1</strain>
    </source>
</reference>
<evidence type="ECO:0000250" key="1">
    <source>
        <dbReference type="UniProtKB" id="P10902"/>
    </source>
</evidence>
<evidence type="ECO:0000305" key="2"/>
<sequence length="464" mass="51710">MKVAVVGSGLAGLTAAMSLAKKGIEVTVFGPKPKESNSYLAQAGIAFPISDGDSIISHVTDTIRGGKYLNDVTVVWNVISKSTEAYHFLTSLGIEFTSRELEGGHSFPRIFTIKNETGKYIIPVLEKHAKEMGVNFIRKFAEEVAIHNKKIVGVFVEGELLYFDAVIIASGGFSGLYKFTAGNPWNLGIPIGDLALKGVPLRDIEFIQFHPTGFIGKRTYLISEAVRGAGAKLVTGEGERFVNELETRDVVAREIYRKMLEGKGVFLDATGIEDFKRRFPYIYSFLRREGINPKRDLIPVTPVAHYTIGGISVDIFYRTPIKGLYAIGEAACNGFHGANRLASNSLLECIVSGIEVSRTVIREKPRGERKEAKYHGYEPGNVDEVRDIMWNHAGIIRREESLRLGLKKLEKVEADPRVKILAEAVLKCALAREESRGAHYREDYPYSREEFRRPSIFRVENCML</sequence>
<accession>Q8TZL4</accession>
<name>NADB_PYRFU</name>
<dbReference type="EC" id="1.4.3.16" evidence="1"/>
<dbReference type="EMBL" id="AE009950">
    <property type="protein sequence ID" value="AAL82100.1"/>
    <property type="molecule type" value="Genomic_DNA"/>
</dbReference>
<dbReference type="RefSeq" id="WP_011013118.1">
    <property type="nucleotide sequence ID" value="NZ_CP023154.1"/>
</dbReference>
<dbReference type="SMR" id="Q8TZL4"/>
<dbReference type="IntAct" id="Q8TZL4">
    <property type="interactions" value="1"/>
</dbReference>
<dbReference type="STRING" id="186497.PF1976"/>
<dbReference type="PaxDb" id="186497-PF1976"/>
<dbReference type="KEGG" id="pfu:PF1976"/>
<dbReference type="PATRIC" id="fig|186497.12.peg.2049"/>
<dbReference type="eggNOG" id="arCOG00572">
    <property type="taxonomic scope" value="Archaea"/>
</dbReference>
<dbReference type="HOGENOM" id="CLU_014312_3_2_2"/>
<dbReference type="OrthoDB" id="23539at2157"/>
<dbReference type="PhylomeDB" id="Q8TZL4"/>
<dbReference type="UniPathway" id="UPA00253">
    <property type="reaction ID" value="UER00326"/>
</dbReference>
<dbReference type="Proteomes" id="UP000001013">
    <property type="component" value="Chromosome"/>
</dbReference>
<dbReference type="GO" id="GO:0005737">
    <property type="term" value="C:cytoplasm"/>
    <property type="evidence" value="ECO:0007669"/>
    <property type="project" value="UniProtKB-SubCell"/>
</dbReference>
<dbReference type="GO" id="GO:0008734">
    <property type="term" value="F:L-aspartate oxidase activity"/>
    <property type="evidence" value="ECO:0007669"/>
    <property type="project" value="UniProtKB-EC"/>
</dbReference>
<dbReference type="GO" id="GO:0000166">
    <property type="term" value="F:nucleotide binding"/>
    <property type="evidence" value="ECO:0007669"/>
    <property type="project" value="UniProtKB-KW"/>
</dbReference>
<dbReference type="GO" id="GO:0009435">
    <property type="term" value="P:NAD biosynthetic process"/>
    <property type="evidence" value="ECO:0007669"/>
    <property type="project" value="UniProtKB-UniPathway"/>
</dbReference>
<dbReference type="Gene3D" id="3.50.50.60">
    <property type="entry name" value="FAD/NAD(P)-binding domain"/>
    <property type="match status" value="1"/>
</dbReference>
<dbReference type="Gene3D" id="1.20.58.100">
    <property type="entry name" value="Fumarate reductase/succinate dehydrogenase flavoprotein-like, C-terminal domain"/>
    <property type="match status" value="1"/>
</dbReference>
<dbReference type="Gene3D" id="3.90.700.10">
    <property type="entry name" value="Succinate dehydrogenase/fumarate reductase flavoprotein, catalytic domain"/>
    <property type="match status" value="1"/>
</dbReference>
<dbReference type="InterPro" id="IPR003953">
    <property type="entry name" value="FAD-dep_OxRdtase_2_FAD-bd"/>
</dbReference>
<dbReference type="InterPro" id="IPR036188">
    <property type="entry name" value="FAD/NAD-bd_sf"/>
</dbReference>
<dbReference type="InterPro" id="IPR037099">
    <property type="entry name" value="Fum_R/Succ_DH_flav-like_C_sf"/>
</dbReference>
<dbReference type="InterPro" id="IPR015939">
    <property type="entry name" value="Fum_Rdtase/Succ_DH_flav-like_C"/>
</dbReference>
<dbReference type="InterPro" id="IPR005288">
    <property type="entry name" value="NadB"/>
</dbReference>
<dbReference type="InterPro" id="IPR027477">
    <property type="entry name" value="Succ_DH/fumarate_Rdtase_cat_sf"/>
</dbReference>
<dbReference type="NCBIfam" id="TIGR00551">
    <property type="entry name" value="nadB"/>
    <property type="match status" value="1"/>
</dbReference>
<dbReference type="NCBIfam" id="NF006254">
    <property type="entry name" value="PRK08401.1"/>
    <property type="match status" value="1"/>
</dbReference>
<dbReference type="PANTHER" id="PTHR42716">
    <property type="entry name" value="L-ASPARTATE OXIDASE"/>
    <property type="match status" value="1"/>
</dbReference>
<dbReference type="PANTHER" id="PTHR42716:SF2">
    <property type="entry name" value="L-ASPARTATE OXIDASE, CHLOROPLASTIC"/>
    <property type="match status" value="1"/>
</dbReference>
<dbReference type="Pfam" id="PF00890">
    <property type="entry name" value="FAD_binding_2"/>
    <property type="match status" value="1"/>
</dbReference>
<dbReference type="Pfam" id="PF02910">
    <property type="entry name" value="Succ_DH_flav_C"/>
    <property type="match status" value="1"/>
</dbReference>
<dbReference type="PRINTS" id="PR00368">
    <property type="entry name" value="FADPNR"/>
</dbReference>
<dbReference type="PRINTS" id="PR00411">
    <property type="entry name" value="PNDRDTASEI"/>
</dbReference>
<dbReference type="SUPFAM" id="SSF51905">
    <property type="entry name" value="FAD/NAD(P)-binding domain"/>
    <property type="match status" value="1"/>
</dbReference>
<dbReference type="SUPFAM" id="SSF46977">
    <property type="entry name" value="Succinate dehydrogenase/fumarate reductase flavoprotein C-terminal domain"/>
    <property type="match status" value="1"/>
</dbReference>
<dbReference type="SUPFAM" id="SSF56425">
    <property type="entry name" value="Succinate dehydrogenase/fumarate reductase flavoprotein, catalytic domain"/>
    <property type="match status" value="1"/>
</dbReference>
<feature type="chain" id="PRO_0000184409" description="L-aspartate oxidase">
    <location>
        <begin position="1"/>
        <end position="464"/>
    </location>
</feature>
<feature type="active site" description="Proton donor/acceptor" evidence="1">
    <location>
        <position position="248"/>
    </location>
</feature>
<feature type="binding site" evidence="1">
    <location>
        <begin position="8"/>
        <end position="11"/>
    </location>
    <ligand>
        <name>FAD</name>
        <dbReference type="ChEBI" id="CHEBI:57692"/>
    </ligand>
</feature>
<feature type="binding site" evidence="1">
    <location>
        <begin position="37"/>
        <end position="44"/>
    </location>
    <ligand>
        <name>FAD</name>
        <dbReference type="ChEBI" id="CHEBI:57692"/>
    </ligand>
</feature>
<feature type="binding site" evidence="1">
    <location>
        <position position="329"/>
    </location>
    <ligand>
        <name>FAD</name>
        <dbReference type="ChEBI" id="CHEBI:57692"/>
    </ligand>
</feature>
<feature type="binding site" evidence="1">
    <location>
        <begin position="345"/>
        <end position="346"/>
    </location>
    <ligand>
        <name>FAD</name>
        <dbReference type="ChEBI" id="CHEBI:57692"/>
    </ligand>
</feature>
<feature type="site" description="Important in orienting the L-aspartate substrate" evidence="1">
    <location>
        <position position="102"/>
    </location>
</feature>